<organism>
    <name type="scientific">Pyrococcus furiosus (strain ATCC 43587 / DSM 3638 / JCM 8422 / Vc1)</name>
    <dbReference type="NCBI Taxonomy" id="186497"/>
    <lineage>
        <taxon>Archaea</taxon>
        <taxon>Methanobacteriati</taxon>
        <taxon>Methanobacteriota</taxon>
        <taxon>Thermococci</taxon>
        <taxon>Thermococcales</taxon>
        <taxon>Thermococcaceae</taxon>
        <taxon>Pyrococcus</taxon>
    </lineage>
</organism>
<protein>
    <recommendedName>
        <fullName>Pyrolysin</fullName>
        <ecNumber>3.4.21.-</ecNumber>
    </recommendedName>
</protein>
<comment type="function">
    <text>Has endopeptidase activity toward caseins, casein fragments including alpha-S1-casein and synthetic peptides.</text>
</comment>
<comment type="biophysicochemical properties">
    <temperatureDependence>
        <text>Thermostable. Highly active at 95 degrees Celsius.</text>
    </temperatureDependence>
</comment>
<comment type="subcellular location">
    <subcellularLocation>
        <location>Cell envelope</location>
    </subcellularLocation>
    <text>Cell envelope associated.</text>
</comment>
<comment type="PTM">
    <text>LWM pyrolysin seems to be produced by autoproteolytic activation of HMW pyrolysin.</text>
</comment>
<comment type="PTM">
    <text>Glycosylated.</text>
</comment>
<comment type="similarity">
    <text evidence="4">Belongs to the peptidase S8 family.</text>
</comment>
<accession>P72186</accession>
<feature type="signal peptide" evidence="1">
    <location>
        <begin position="1"/>
        <end position="26"/>
    </location>
</feature>
<feature type="propeptide" id="PRO_0000027128" evidence="3">
    <location>
        <begin position="27"/>
        <end position="149"/>
    </location>
</feature>
<feature type="chain" id="PRO_0000027129" description="Pyrolysin">
    <location>
        <begin position="150"/>
        <end position="1398"/>
    </location>
</feature>
<feature type="domain" description="Peptidase S8" evidence="2">
    <location>
        <begin position="154"/>
        <end position="656"/>
    </location>
</feature>
<feature type="active site" description="Charge relay system" evidence="2">
    <location>
        <position position="179"/>
    </location>
</feature>
<feature type="active site" description="Charge relay system" evidence="2">
    <location>
        <position position="365"/>
    </location>
</feature>
<feature type="active site" description="Charge relay system" evidence="2">
    <location>
        <position position="590"/>
    </location>
</feature>
<feature type="glycosylation site" description="N-linked (GlcNAc...) asparagine">
    <location>
        <position position="152"/>
    </location>
</feature>
<feature type="glycosylation site" description="N-linked (GlcNAc...) asparagine" evidence="1">
    <location>
        <position position="222"/>
    </location>
</feature>
<feature type="glycosylation site" description="N-linked (GlcNAc...) asparagine" evidence="1">
    <location>
        <position position="228"/>
    </location>
</feature>
<feature type="glycosylation site" description="N-linked (GlcNAc...) asparagine" evidence="1">
    <location>
        <position position="240"/>
    </location>
</feature>
<feature type="glycosylation site" description="N-linked (GlcNAc...) asparagine" evidence="1">
    <location>
        <position position="257"/>
    </location>
</feature>
<feature type="glycosylation site" description="N-linked (GlcNAc...) asparagine" evidence="1">
    <location>
        <position position="262"/>
    </location>
</feature>
<feature type="glycosylation site" description="N-linked (GlcNAc...) asparagine" evidence="1">
    <location>
        <position position="298"/>
    </location>
</feature>
<feature type="glycosylation site" description="N-linked (GlcNAc...) asparagine" evidence="1">
    <location>
        <position position="327"/>
    </location>
</feature>
<feature type="glycosylation site" description="N-linked (GlcNAc...) asparagine" evidence="1">
    <location>
        <position position="406"/>
    </location>
</feature>
<feature type="glycosylation site" description="N-linked (GlcNAc...) asparagine" evidence="1">
    <location>
        <position position="651"/>
    </location>
</feature>
<feature type="glycosylation site" description="N-linked (GlcNAc...) asparagine" evidence="1">
    <location>
        <position position="663"/>
    </location>
</feature>
<feature type="glycosylation site" description="N-linked (GlcNAc...) asparagine" evidence="1">
    <location>
        <position position="739"/>
    </location>
</feature>
<feature type="glycosylation site" description="N-linked (GlcNAc...) asparagine" evidence="1">
    <location>
        <position position="792"/>
    </location>
</feature>
<feature type="glycosylation site" description="N-linked (GlcNAc...) asparagine" evidence="1">
    <location>
        <position position="893"/>
    </location>
</feature>
<feature type="glycosylation site" description="N-linked (GlcNAc...) asparagine" evidence="1">
    <location>
        <position position="908"/>
    </location>
</feature>
<feature type="glycosylation site" description="N-linked (GlcNAc...) asparagine" evidence="1">
    <location>
        <position position="917"/>
    </location>
</feature>
<feature type="glycosylation site" description="N-linked (GlcNAc...) asparagine" evidence="1">
    <location>
        <position position="929"/>
    </location>
</feature>
<feature type="glycosylation site" description="N-linked (GlcNAc...) asparagine" evidence="1">
    <location>
        <position position="1048"/>
    </location>
</feature>
<feature type="glycosylation site" description="N-linked (GlcNAc...) asparagine" evidence="1">
    <location>
        <position position="1056"/>
    </location>
</feature>
<feature type="glycosylation site" description="N-linked (GlcNAc...) asparagine" evidence="1">
    <location>
        <position position="1084"/>
    </location>
</feature>
<feature type="glycosylation site" description="N-linked (GlcNAc...) asparagine" evidence="1">
    <location>
        <position position="1117"/>
    </location>
</feature>
<feature type="glycosylation site" description="N-linked (GlcNAc...) asparagine" evidence="1">
    <location>
        <position position="1133"/>
    </location>
</feature>
<feature type="glycosylation site" description="N-linked (GlcNAc...) asparagine" evidence="1">
    <location>
        <position position="1140"/>
    </location>
</feature>
<feature type="glycosylation site" description="N-linked (GlcNAc...) asparagine" evidence="1">
    <location>
        <position position="1148"/>
    </location>
</feature>
<feature type="glycosylation site" description="N-linked (GlcNAc...) asparagine" evidence="1">
    <location>
        <position position="1208"/>
    </location>
</feature>
<feature type="glycosylation site" description="N-linked (GlcNAc...) asparagine" evidence="1">
    <location>
        <position position="1233"/>
    </location>
</feature>
<feature type="glycosylation site" description="N-linked (GlcNAc...) asparagine" evidence="1">
    <location>
        <position position="1237"/>
    </location>
</feature>
<feature type="glycosylation site" description="N-linked (GlcNAc...) asparagine" evidence="1">
    <location>
        <position position="1332"/>
    </location>
</feature>
<feature type="sequence conflict" description="In Ref. 1; AAB09761." evidence="4" ref="1">
    <original>AKA</original>
    <variation>PKP</variation>
    <location>
        <begin position="607"/>
        <end position="609"/>
    </location>
</feature>
<feature type="sequence conflict" description="In Ref. 1; AAB09761." evidence="4" ref="1">
    <original>Y</original>
    <variation>H</variation>
    <location>
        <position position="881"/>
    </location>
</feature>
<name>PLS_PYRFU</name>
<evidence type="ECO:0000255" key="1"/>
<evidence type="ECO:0000255" key="2">
    <source>
        <dbReference type="PROSITE-ProRule" id="PRU01240"/>
    </source>
</evidence>
<evidence type="ECO:0000269" key="3">
    <source>
    </source>
</evidence>
<evidence type="ECO:0000305" key="4"/>
<keyword id="KW-0903">Direct protein sequencing</keyword>
<keyword id="KW-0325">Glycoprotein</keyword>
<keyword id="KW-0378">Hydrolase</keyword>
<keyword id="KW-0645">Protease</keyword>
<keyword id="KW-1185">Reference proteome</keyword>
<keyword id="KW-0720">Serine protease</keyword>
<keyword id="KW-0732">Signal</keyword>
<keyword id="KW-0865">Zymogen</keyword>
<gene>
    <name type="primary">pls</name>
    <name type="ordered locus">PF0287</name>
</gene>
<dbReference type="EC" id="3.4.21.-"/>
<dbReference type="EMBL" id="U55835">
    <property type="protein sequence ID" value="AAB09761.1"/>
    <property type="molecule type" value="Genomic_DNA"/>
</dbReference>
<dbReference type="EMBL" id="AE009950">
    <property type="protein sequence ID" value="AAL80411.1"/>
    <property type="molecule type" value="Genomic_DNA"/>
</dbReference>
<dbReference type="PIR" id="T28159">
    <property type="entry name" value="T28159"/>
</dbReference>
<dbReference type="RefSeq" id="WP_011011401.1">
    <property type="nucleotide sequence ID" value="NZ_CP023154.1"/>
</dbReference>
<dbReference type="SMR" id="P72186"/>
<dbReference type="STRING" id="186497.PF0287"/>
<dbReference type="MEROPS" id="S08.100"/>
<dbReference type="GlyCosmos" id="P72186">
    <property type="glycosylation" value="28 sites, No reported glycans"/>
</dbReference>
<dbReference type="PaxDb" id="186497-PF0287"/>
<dbReference type="GeneID" id="41712077"/>
<dbReference type="KEGG" id="pfu:PF0287"/>
<dbReference type="PATRIC" id="fig|186497.12.peg.299"/>
<dbReference type="eggNOG" id="arCOG00704">
    <property type="taxonomic scope" value="Archaea"/>
</dbReference>
<dbReference type="eggNOG" id="arCOG03610">
    <property type="taxonomic scope" value="Archaea"/>
</dbReference>
<dbReference type="HOGENOM" id="CLU_264582_0_0_2"/>
<dbReference type="OrthoDB" id="27270at2157"/>
<dbReference type="BRENDA" id="3.4.21.B55">
    <property type="organism ID" value="5243"/>
</dbReference>
<dbReference type="Proteomes" id="UP000001013">
    <property type="component" value="Chromosome"/>
</dbReference>
<dbReference type="GO" id="GO:0004252">
    <property type="term" value="F:serine-type endopeptidase activity"/>
    <property type="evidence" value="ECO:0007669"/>
    <property type="project" value="InterPro"/>
</dbReference>
<dbReference type="GO" id="GO:0006508">
    <property type="term" value="P:proteolysis"/>
    <property type="evidence" value="ECO:0007669"/>
    <property type="project" value="UniProtKB-KW"/>
</dbReference>
<dbReference type="Gene3D" id="2.60.120.380">
    <property type="match status" value="1"/>
</dbReference>
<dbReference type="Gene3D" id="3.40.50.200">
    <property type="entry name" value="Peptidase S8/S53 domain"/>
    <property type="match status" value="2"/>
</dbReference>
<dbReference type="InterPro" id="IPR007280">
    <property type="entry name" value="Peptidase_C_arc/bac"/>
</dbReference>
<dbReference type="InterPro" id="IPR000209">
    <property type="entry name" value="Peptidase_S8/S53_dom"/>
</dbReference>
<dbReference type="InterPro" id="IPR036852">
    <property type="entry name" value="Peptidase_S8/S53_dom_sf"/>
</dbReference>
<dbReference type="InterPro" id="IPR023827">
    <property type="entry name" value="Peptidase_S8_Asp-AS"/>
</dbReference>
<dbReference type="InterPro" id="IPR022398">
    <property type="entry name" value="Peptidase_S8_His-AS"/>
</dbReference>
<dbReference type="InterPro" id="IPR023828">
    <property type="entry name" value="Peptidase_S8_Ser-AS"/>
</dbReference>
<dbReference type="InterPro" id="IPR050131">
    <property type="entry name" value="Peptidase_S8_subtilisin-like"/>
</dbReference>
<dbReference type="InterPro" id="IPR015500">
    <property type="entry name" value="Peptidase_S8_subtilisin-rel"/>
</dbReference>
<dbReference type="PANTHER" id="PTHR43806:SF11">
    <property type="entry name" value="CEREVISIN-RELATED"/>
    <property type="match status" value="1"/>
</dbReference>
<dbReference type="PANTHER" id="PTHR43806">
    <property type="entry name" value="PEPTIDASE S8"/>
    <property type="match status" value="1"/>
</dbReference>
<dbReference type="Pfam" id="PF00082">
    <property type="entry name" value="Peptidase_S8"/>
    <property type="match status" value="1"/>
</dbReference>
<dbReference type="Pfam" id="PF04151">
    <property type="entry name" value="PPC"/>
    <property type="match status" value="1"/>
</dbReference>
<dbReference type="PRINTS" id="PR00723">
    <property type="entry name" value="SUBTILISIN"/>
</dbReference>
<dbReference type="SUPFAM" id="SSF81901">
    <property type="entry name" value="HCP-like"/>
    <property type="match status" value="1"/>
</dbReference>
<dbReference type="SUPFAM" id="SSF52743">
    <property type="entry name" value="Subtilisin-like"/>
    <property type="match status" value="1"/>
</dbReference>
<dbReference type="PROSITE" id="PS51892">
    <property type="entry name" value="SUBTILASE"/>
    <property type="match status" value="1"/>
</dbReference>
<dbReference type="PROSITE" id="PS00136">
    <property type="entry name" value="SUBTILASE_ASP"/>
    <property type="match status" value="1"/>
</dbReference>
<dbReference type="PROSITE" id="PS00137">
    <property type="entry name" value="SUBTILASE_HIS"/>
    <property type="match status" value="1"/>
</dbReference>
<dbReference type="PROSITE" id="PS00138">
    <property type="entry name" value="SUBTILASE_SER"/>
    <property type="match status" value="1"/>
</dbReference>
<sequence>MNKKGLTVLFIAIMLLSVVPVHFVSAGTPPVSSENSTTSILPNQQVVTKEVSQAALNAIMKGQPNMVLIIKTKEGKLEEAKTELEKLGAEILDENRVLNMLLVKIKPEKVKELNYISSLEKAWLNREVKLSPPIVEKDVKTKEPSLEPKMYNSTWVINALQFIQEFGYDGSGVVVAVLDTGVDPNHPFLSITPDGRRKIIEWKDFTDEGFVDTSFSFSKVVNGTLIINTTFQVASGLTLNESTGLMEYVVKTVYVSNVTIGNITSANGIYHFGLLPERYFDLNFDGDQEDFYPVLLVNSTGNGYDIAYVDTDLDYDFTDEVPLGQYNVTYDVAVFSYYYGPLNYVLAEIDPNGEYAVFGWDGHGHGTHVAGTVAGYDSNNDAWDWLSMYSGEWEVFSRLYGWDYTNVTTDTVQGVAPGAQIMAIRVLRSDGRGSMWDIIEGMTYAATHGADVISMSLGGNAPYLDGTDPESVAVDELTEKYGVVFVIAAGNEGPGINIVGSPGVATKAITVGAAAVPINVGVYVSQALGYPDYYGFYYFPAYTNVRIAFFSSRGPRIDGEIKPNVVAPGYGIYSSLPMWIGGADFMSGTSMATPHVSGVVALLISGAKAEGIYYNPDIIKKVLESGATWLEGDPYTGQKYTELDQGHGLVNVTKSWEILKAINGTTLPIVDHWADKSYSDFAEYLGVDVIRGLYARNSIPDIVEWHIKYVGDTEYRTFEIYATEPWIKPFVSGSVILENNTEFVLRVKYDVEGLEPGLYVGRIIIDDPTTPVIEDEILNTIVIPEKFTPENNYTLTWYDINGPEMVTHHFFTVPEGVDVLYAMTTYWDYGLYRPDGMFVFPYQLDYLPAAVSNPMPGNWELVWTGFNFAPLYESGFLVRIYGVEITPSVWYINRTYLDTNTEFSIEFNITNIYAPINATLIPIGLGTYNASVESVGDGEFFIKGIEVPEGTAELKIRIGNPSVPNSDLDLYLYDSKGNLVALDGNPTAEEEVVVEYPKPGVYSIVVHGYSVRDENGNPTTTTFDLVVQMTLDNGNIKLDKDSIILGSNESVVVTANITIDRDHPTGVYSGIIEIRDNEVYQDTNTSIAKIPITLVIDKADFAVGLTPAEGVLGEARNYTLIVKHALTLEPVPNATVIIGNYTYLTDENGTVTFTYAPTKLGSDEITVIVKKENFNTLEKTFQITVSEPEITEEDINEPKLAMSSPEANATIVSVEMESEGGVKKTVTVEITINGTANETATIVVPVPKKAENIEVSGDHVISYSIEEGEYAKYVIITVKFASPVTVTVTYTIYAGPRVSILTLNFLGYSWYRLYSQKFDELYQKALELGVDNETLALALSYHEKAKEYYEKALELSEGNIIQYLGDIRLLPPLRQAYINEMKAVKILEKAIEELEGEE</sequence>
<reference key="1">
    <citation type="journal article" date="1996" name="J. Biol. Chem.">
        <title>Isolation and characterization of the hyperthermostable serine protease, pyrolysin, and its gene from the hyperthermophilic archaeon Pyrococcus furiosus.</title>
        <authorList>
            <person name="Voorhorst W.G.B."/>
            <person name="Eggen R.I.L."/>
            <person name="Geerling A.C.M."/>
            <person name="Platteeuw C."/>
            <person name="Siezen R.J."/>
            <person name="de Vos W.M."/>
        </authorList>
    </citation>
    <scope>NUCLEOTIDE SEQUENCE [GENOMIC DNA]</scope>
    <scope>PROTEIN SEQUENCE OF 150-184</scope>
    <scope>CHARACTERIZATION</scope>
    <source>
        <strain>ATCC 43587 / DSM 3638 / JCM 8422 / Vc1</strain>
    </source>
</reference>
<reference key="2">
    <citation type="journal article" date="1999" name="Genetics">
        <title>Divergence of the hyperthermophilic archaea Pyrococcus furiosus and P. horikoshii inferred from complete genomic sequences.</title>
        <authorList>
            <person name="Maeder D.L."/>
            <person name="Weiss R.B."/>
            <person name="Dunn D.M."/>
            <person name="Cherry J.L."/>
            <person name="Gonzalez J.M."/>
            <person name="DiRuggiero J."/>
            <person name="Robb F.T."/>
        </authorList>
    </citation>
    <scope>NUCLEOTIDE SEQUENCE [LARGE SCALE GENOMIC DNA]</scope>
    <source>
        <strain>ATCC 43587 / DSM 3638 / JCM 8422 / Vc1</strain>
    </source>
</reference>
<reference key="3">
    <citation type="journal article" date="2001" name="Methods Enzymol.">
        <title>Purification, characterization, and molecular modeling of pyrolysin and other extracellular thermostable serine proteases from hyperthermophilic microorganisms.</title>
        <authorList>
            <person name="de Vos W.M."/>
            <person name="Voorhorst W.G.B."/>
            <person name="Dijkgraaf M."/>
            <person name="Kluskens L.D."/>
            <person name="Van der Oost J."/>
            <person name="Siezen R.J."/>
        </authorList>
    </citation>
    <scope>CHARACTERIZATION</scope>
    <scope>3D-STRUCTURE MODELING</scope>
</reference>
<proteinExistence type="evidence at protein level"/>